<keyword id="KW-0010">Activator</keyword>
<keyword id="KW-0014">AIDS</keyword>
<keyword id="KW-0053">Apoptosis</keyword>
<keyword id="KW-0131">Cell cycle</keyword>
<keyword id="KW-1079">Host G2/M cell cycle arrest by virus</keyword>
<keyword id="KW-1048">Host nucleus</keyword>
<keyword id="KW-0945">Host-virus interaction</keyword>
<keyword id="KW-0407">Ion channel</keyword>
<keyword id="KW-0406">Ion transport</keyword>
<keyword id="KW-1121">Modulation of host cell cycle by virus</keyword>
<keyword id="KW-0597">Phosphoprotein</keyword>
<keyword id="KW-0804">Transcription</keyword>
<keyword id="KW-0805">Transcription regulation</keyword>
<keyword id="KW-0813">Transport</keyword>
<keyword id="KW-1163">Viral penetration into host nucleus</keyword>
<keyword id="KW-0946">Virion</keyword>
<keyword id="KW-1160">Virus entry into host cell</keyword>
<protein>
    <recommendedName>
        <fullName evidence="1">Protein Vpr</fullName>
    </recommendedName>
    <alternativeName>
        <fullName evidence="1">R ORF protein</fullName>
    </alternativeName>
    <alternativeName>
        <fullName evidence="1">Viral protein R</fullName>
    </alternativeName>
</protein>
<reference key="1">
    <citation type="journal article" date="1990" name="J. Virol.">
        <title>Human immunodeficiency virus type 1 cellular host range, replication, and cytopathicity are linked to the envelope region of the viral genome.</title>
        <authorList>
            <person name="York-Higgins D."/>
            <person name="Cheng-Mayer C."/>
            <person name="Bauer D."/>
            <person name="Levy J.A."/>
            <person name="Dina D."/>
        </authorList>
    </citation>
    <scope>NUCLEOTIDE SEQUENCE [GENOMIC DNA]</scope>
</reference>
<reference key="2">
    <citation type="submission" date="2003-07" db="EMBL/GenBank/DDBJ databases">
        <authorList>
            <person name="York-Higgins D."/>
            <person name="Cheng-Mayer C."/>
            <person name="Bauer D."/>
            <person name="Levy J.A."/>
            <person name="Dina D."/>
            <person name="Bonneau K.R."/>
        </authorList>
    </citation>
    <scope>SEQUENCE REVISION</scope>
</reference>
<sequence length="96" mass="11366">MEQAPENQGPQREPYNEWTLELLEELKSEAVRHFPRIWLHSLGQHIYKTYGDTWTGVEALIRILQQLLFIHFRIGCQHSRIGITRQRRARNGASRS</sequence>
<name>VPR_HV1S3</name>
<gene>
    <name evidence="1" type="primary">vpr</name>
</gene>
<feature type="chain" id="PRO_0000085443" description="Protein Vpr">
    <location>
        <begin position="1"/>
        <end position="96"/>
    </location>
</feature>
<feature type="region of interest" description="Homooligomerization" evidence="1">
    <location>
        <begin position="1"/>
        <end position="42"/>
    </location>
</feature>
<feature type="modified residue" description="Phosphoserine; by host" evidence="1">
    <location>
        <position position="79"/>
    </location>
</feature>
<feature type="modified residue" description="Phosphoserine; by host" evidence="1">
    <location>
        <position position="94"/>
    </location>
</feature>
<feature type="modified residue" description="Phosphoserine; by host" evidence="1">
    <location>
        <position position="96"/>
    </location>
</feature>
<dbReference type="EMBL" id="AY352275">
    <property type="protein sequence ID" value="AAA45066.2"/>
    <property type="molecule type" value="Genomic_DNA"/>
</dbReference>
<dbReference type="BMRB" id="P19555"/>
<dbReference type="SMR" id="P19555"/>
<dbReference type="Proteomes" id="UP000118752">
    <property type="component" value="Genome"/>
</dbReference>
<dbReference type="GO" id="GO:0043657">
    <property type="term" value="C:host cell"/>
    <property type="evidence" value="ECO:0007669"/>
    <property type="project" value="GOC"/>
</dbReference>
<dbReference type="GO" id="GO:0042025">
    <property type="term" value="C:host cell nucleus"/>
    <property type="evidence" value="ECO:0007669"/>
    <property type="project" value="UniProtKB-SubCell"/>
</dbReference>
<dbReference type="GO" id="GO:0043655">
    <property type="term" value="C:host extracellular space"/>
    <property type="evidence" value="ECO:0007669"/>
    <property type="project" value="UniProtKB-SubCell"/>
</dbReference>
<dbReference type="GO" id="GO:0044423">
    <property type="term" value="C:virion component"/>
    <property type="evidence" value="ECO:0007669"/>
    <property type="project" value="UniProtKB-UniRule"/>
</dbReference>
<dbReference type="GO" id="GO:0006351">
    <property type="term" value="P:DNA-templated transcription"/>
    <property type="evidence" value="ECO:0007669"/>
    <property type="project" value="UniProtKB-UniRule"/>
</dbReference>
<dbReference type="GO" id="GO:0034220">
    <property type="term" value="P:monoatomic ion transmembrane transport"/>
    <property type="evidence" value="ECO:0007669"/>
    <property type="project" value="UniProtKB-KW"/>
</dbReference>
<dbReference type="GO" id="GO:0051260">
    <property type="term" value="P:protein homooligomerization"/>
    <property type="evidence" value="ECO:0007669"/>
    <property type="project" value="UniProtKB-UniRule"/>
</dbReference>
<dbReference type="GO" id="GO:0006355">
    <property type="term" value="P:regulation of DNA-templated transcription"/>
    <property type="evidence" value="ECO:0007669"/>
    <property type="project" value="UniProtKB-UniRule"/>
</dbReference>
<dbReference type="GO" id="GO:0046718">
    <property type="term" value="P:symbiont entry into host cell"/>
    <property type="evidence" value="ECO:0007669"/>
    <property type="project" value="UniProtKB-KW"/>
</dbReference>
<dbReference type="GO" id="GO:0052151">
    <property type="term" value="P:symbiont-mediated activation of host apoptosis"/>
    <property type="evidence" value="ECO:0007669"/>
    <property type="project" value="UniProtKB-UniRule"/>
</dbReference>
<dbReference type="GO" id="GO:0039592">
    <property type="term" value="P:symbiont-mediated arrest of host cell cycle during G2/M transition"/>
    <property type="evidence" value="ECO:0007669"/>
    <property type="project" value="UniProtKB-UniRule"/>
</dbReference>
<dbReference type="GO" id="GO:0075732">
    <property type="term" value="P:viral penetration into host nucleus"/>
    <property type="evidence" value="ECO:0007669"/>
    <property type="project" value="UniProtKB-UniRule"/>
</dbReference>
<dbReference type="FunFam" id="1.20.5.90:FF:000001">
    <property type="entry name" value="Protein Vpr"/>
    <property type="match status" value="1"/>
</dbReference>
<dbReference type="Gene3D" id="6.10.210.10">
    <property type="match status" value="1"/>
</dbReference>
<dbReference type="Gene3D" id="1.20.5.90">
    <property type="entry name" value="VpR/VpX protein, C-terminal domain"/>
    <property type="match status" value="1"/>
</dbReference>
<dbReference type="HAMAP" id="MF_04080">
    <property type="entry name" value="HIV_VPR"/>
    <property type="match status" value="1"/>
</dbReference>
<dbReference type="InterPro" id="IPR000012">
    <property type="entry name" value="RetroV_VpR/X"/>
</dbReference>
<dbReference type="Pfam" id="PF00522">
    <property type="entry name" value="VPR"/>
    <property type="match status" value="1"/>
</dbReference>
<dbReference type="PRINTS" id="PR00444">
    <property type="entry name" value="HIVVPRVPX"/>
</dbReference>
<evidence type="ECO:0000255" key="1">
    <source>
        <dbReference type="HAMAP-Rule" id="MF_04080"/>
    </source>
</evidence>
<organism>
    <name type="scientific">Human immunodeficiency virus type 1 group M subtype B (isolate SF33)</name>
    <name type="common">HIV-1</name>
    <dbReference type="NCBI Taxonomy" id="11690"/>
    <lineage>
        <taxon>Viruses</taxon>
        <taxon>Riboviria</taxon>
        <taxon>Pararnavirae</taxon>
        <taxon>Artverviricota</taxon>
        <taxon>Revtraviricetes</taxon>
        <taxon>Ortervirales</taxon>
        <taxon>Retroviridae</taxon>
        <taxon>Orthoretrovirinae</taxon>
        <taxon>Lentivirus</taxon>
        <taxon>Human immunodeficiency virus type 1</taxon>
    </lineage>
</organism>
<organismHost>
    <name type="scientific">Homo sapiens</name>
    <name type="common">Human</name>
    <dbReference type="NCBI Taxonomy" id="9606"/>
</organismHost>
<comment type="function">
    <text evidence="1">During virus replication, may deplete host UNG protein, and incude G2-M cell cycle arrest. Acts by targeting specific host proteins for degradation by the 26S proteasome, through association with the cellular CUL4A-DDB1 E3 ligase complex by direct interaction with host VPRPB/DCAF-1. Cell cycle arrest reportedly occurs within hours of infection and is not blocked by antiviral agents, suggesting that it is initiated by the VPR carried into the virion. Additionally, VPR induces apoptosis in a cell cycle dependent manner suggesting that these two effects are mechanistically linked. Detected in the serum and cerebrospinal fluid of AIDS patient, VPR may also induce cell death to bystander cells.</text>
</comment>
<comment type="function">
    <text evidence="1">During virus entry, plays a role in the transport of the viral pre-integration (PIC) complex to the host nucleus. This function is crucial for viral infection of non-dividing macrophages. May act directly at the nuclear pore complex, by binding nucleoporins phenylalanine-glycine (FG)-repeat regions.</text>
</comment>
<comment type="subunit">
    <text evidence="1">Homooligomer, may form homodimer. Interacts with p6-gag region of the Pr55 Gag precursor protein through a (Leu-X-X)4 motif near the C-terminus of the P6gag protein. Interacts with host UNG. May interact with host RAD23A/HHR23A. Interacts with host VPRBP/DCAF1, leading to hijack the CUL4A-RBX1-DDB1-DCAF1/VPRBP complex, mediating ubiquitination of host proteins such as TERT and ZGPAT and arrest of the cell cycle in G2 phase.</text>
</comment>
<comment type="subcellular location">
    <subcellularLocation>
        <location evidence="1">Virion</location>
    </subcellularLocation>
    <subcellularLocation>
        <location evidence="1">Host nucleus</location>
    </subcellularLocation>
    <subcellularLocation>
        <location evidence="1">Host extracellular space</location>
    </subcellularLocation>
    <text evidence="1">Incorporation into virion is dependent on p6 GAG sequences. Lacks a canonical nuclear localization signal, thus import into nucleus may function independently of the human importin pathway. Detected in high quantity in the serum and cerebrospinal fluid of AIDS patient.</text>
</comment>
<comment type="PTM">
    <text evidence="1">Phosphorylated on several residues by host. These phosphorylations regulate VPR activity for the nuclear import of the HIV-1 pre-integration complex.</text>
</comment>
<comment type="miscellaneous">
    <text evidence="1">HIV-1 lineages are divided in three main groups, M (for Major), O (for Outlier), and N (for New, or Non-M, Non-O). The vast majority of strains found worldwide belong to the group M. Group O seems to be endemic to and largely confined to Cameroon and neighboring countries in West Central Africa, where these viruses represent a small minority of HIV-1 strains. The group N is represented by a limited number of isolates from Cameroonian persons. The group M is further subdivided in 9 clades or subtypes (A to D, F to H, J and K).</text>
</comment>
<comment type="similarity">
    <text evidence="1">Belongs to the HIV-1 VPR protein family.</text>
</comment>
<proteinExistence type="inferred from homology"/>
<accession>P19555</accession>